<reference key="1">
    <citation type="journal article" date="2006" name="Genome Biol.">
        <title>The genome of Rhizobium leguminosarum has recognizable core and accessory components.</title>
        <authorList>
            <person name="Young J.P.W."/>
            <person name="Crossman L.C."/>
            <person name="Johnston A.W.B."/>
            <person name="Thomson N.R."/>
            <person name="Ghazoui Z.F."/>
            <person name="Hull K.H."/>
            <person name="Wexler M."/>
            <person name="Curson A.R.J."/>
            <person name="Todd J.D."/>
            <person name="Poole P.S."/>
            <person name="Mauchline T.H."/>
            <person name="East A.K."/>
            <person name="Quail M.A."/>
            <person name="Churcher C."/>
            <person name="Arrowsmith C."/>
            <person name="Cherevach I."/>
            <person name="Chillingworth T."/>
            <person name="Clarke K."/>
            <person name="Cronin A."/>
            <person name="Davis P."/>
            <person name="Fraser A."/>
            <person name="Hance Z."/>
            <person name="Hauser H."/>
            <person name="Jagels K."/>
            <person name="Moule S."/>
            <person name="Mungall K."/>
            <person name="Norbertczak H."/>
            <person name="Rabbinowitsch E."/>
            <person name="Sanders M."/>
            <person name="Simmonds M."/>
            <person name="Whitehead S."/>
            <person name="Parkhill J."/>
        </authorList>
    </citation>
    <scope>NUCLEOTIDE SEQUENCE [LARGE SCALE GENOMIC DNA]</scope>
    <source>
        <strain>DSM 114642 / LMG 32736 / 3841</strain>
    </source>
</reference>
<protein>
    <recommendedName>
        <fullName evidence="1">Trigger factor</fullName>
        <shortName evidence="1">TF</shortName>
        <ecNumber evidence="1">5.2.1.8</ecNumber>
    </recommendedName>
    <alternativeName>
        <fullName evidence="1">PPIase</fullName>
    </alternativeName>
</protein>
<sequence>MQVIETLAEGLKREIKVVIPAKDMQDKMNERLADVKDKVRINGFRPGKVPAAHLKKVYGKSIMADLVNEIVREQPAAILSSRGEKSATQPEIAMTEDKDEADKILAAEQDFEFTLSYEVLPPIELKSVKGIKVTREVIDISDDEVNEQVLKVAESARAYETKTGKAANGDRITMDYVGKVDGEAFEGGTDQGAELVLGSGRFIPGFEDQLVGVKAGAEKTITVTFPADYPAKNLAGKEATFDVTVKEVAAPADVEINDELASKLGIESADRLKEIVRGQIESQYGSLTRQKLKRQILDQLDEMYKFETPNSLVDAEYNGIWSQVNNDLAQSGKTFEDEDTTEEKAREEYKTLAERRVRLGLVLSEIGEKAGVEVSEDEMQRAIYDQLRQYPGQEKQILEFFRSQPGAAASIRAPIFEEKVIDHLLTEIDVTDKKVTKEELLAEEEGEAKAETKKAAPKKKAAAKAEAADAGEGEEAAPKKKAAPKKKAADESAE</sequence>
<keyword id="KW-0131">Cell cycle</keyword>
<keyword id="KW-0132">Cell division</keyword>
<keyword id="KW-0143">Chaperone</keyword>
<keyword id="KW-0963">Cytoplasm</keyword>
<keyword id="KW-0413">Isomerase</keyword>
<keyword id="KW-0697">Rotamase</keyword>
<gene>
    <name evidence="1" type="primary">tig</name>
    <name type="ordered locus">RL2062</name>
</gene>
<dbReference type="EC" id="5.2.1.8" evidence="1"/>
<dbReference type="EMBL" id="AM236080">
    <property type="protein sequence ID" value="CAK07554.1"/>
    <property type="molecule type" value="Genomic_DNA"/>
</dbReference>
<dbReference type="RefSeq" id="WP_011651670.1">
    <property type="nucleotide sequence ID" value="NC_008380.1"/>
</dbReference>
<dbReference type="SMR" id="Q1MHK9"/>
<dbReference type="EnsemblBacteria" id="CAK07554">
    <property type="protein sequence ID" value="CAK07554"/>
    <property type="gene ID" value="RL2062"/>
</dbReference>
<dbReference type="KEGG" id="rle:RL2062"/>
<dbReference type="eggNOG" id="COG0544">
    <property type="taxonomic scope" value="Bacteria"/>
</dbReference>
<dbReference type="HOGENOM" id="CLU_033058_2_2_5"/>
<dbReference type="Proteomes" id="UP000006575">
    <property type="component" value="Chromosome"/>
</dbReference>
<dbReference type="GO" id="GO:0005737">
    <property type="term" value="C:cytoplasm"/>
    <property type="evidence" value="ECO:0007669"/>
    <property type="project" value="UniProtKB-SubCell"/>
</dbReference>
<dbReference type="GO" id="GO:0003755">
    <property type="term" value="F:peptidyl-prolyl cis-trans isomerase activity"/>
    <property type="evidence" value="ECO:0007669"/>
    <property type="project" value="UniProtKB-UniRule"/>
</dbReference>
<dbReference type="GO" id="GO:0044183">
    <property type="term" value="F:protein folding chaperone"/>
    <property type="evidence" value="ECO:0007669"/>
    <property type="project" value="TreeGrafter"/>
</dbReference>
<dbReference type="GO" id="GO:0043022">
    <property type="term" value="F:ribosome binding"/>
    <property type="evidence" value="ECO:0007669"/>
    <property type="project" value="TreeGrafter"/>
</dbReference>
<dbReference type="GO" id="GO:0051083">
    <property type="term" value="P:'de novo' cotranslational protein folding"/>
    <property type="evidence" value="ECO:0007669"/>
    <property type="project" value="TreeGrafter"/>
</dbReference>
<dbReference type="GO" id="GO:0051301">
    <property type="term" value="P:cell division"/>
    <property type="evidence" value="ECO:0007669"/>
    <property type="project" value="UniProtKB-KW"/>
</dbReference>
<dbReference type="GO" id="GO:0061077">
    <property type="term" value="P:chaperone-mediated protein folding"/>
    <property type="evidence" value="ECO:0007669"/>
    <property type="project" value="TreeGrafter"/>
</dbReference>
<dbReference type="GO" id="GO:0015031">
    <property type="term" value="P:protein transport"/>
    <property type="evidence" value="ECO:0007669"/>
    <property type="project" value="UniProtKB-UniRule"/>
</dbReference>
<dbReference type="GO" id="GO:0043335">
    <property type="term" value="P:protein unfolding"/>
    <property type="evidence" value="ECO:0007669"/>
    <property type="project" value="TreeGrafter"/>
</dbReference>
<dbReference type="FunFam" id="3.10.50.40:FF:000001">
    <property type="entry name" value="Trigger factor"/>
    <property type="match status" value="1"/>
</dbReference>
<dbReference type="Gene3D" id="3.10.50.40">
    <property type="match status" value="1"/>
</dbReference>
<dbReference type="Gene3D" id="3.30.70.1050">
    <property type="entry name" value="Trigger factor ribosome-binding domain"/>
    <property type="match status" value="1"/>
</dbReference>
<dbReference type="Gene3D" id="1.10.3120.10">
    <property type="entry name" value="Trigger factor, C-terminal domain"/>
    <property type="match status" value="1"/>
</dbReference>
<dbReference type="HAMAP" id="MF_00303">
    <property type="entry name" value="Trigger_factor_Tig"/>
    <property type="match status" value="1"/>
</dbReference>
<dbReference type="InterPro" id="IPR046357">
    <property type="entry name" value="PPIase_dom_sf"/>
</dbReference>
<dbReference type="InterPro" id="IPR001179">
    <property type="entry name" value="PPIase_FKBP_dom"/>
</dbReference>
<dbReference type="InterPro" id="IPR005215">
    <property type="entry name" value="Trig_fac"/>
</dbReference>
<dbReference type="InterPro" id="IPR008880">
    <property type="entry name" value="Trigger_fac_C"/>
</dbReference>
<dbReference type="InterPro" id="IPR037041">
    <property type="entry name" value="Trigger_fac_C_sf"/>
</dbReference>
<dbReference type="InterPro" id="IPR008881">
    <property type="entry name" value="Trigger_fac_ribosome-bd_bac"/>
</dbReference>
<dbReference type="InterPro" id="IPR036611">
    <property type="entry name" value="Trigger_fac_ribosome-bd_sf"/>
</dbReference>
<dbReference type="InterPro" id="IPR027304">
    <property type="entry name" value="Trigger_fact/SurA_dom_sf"/>
</dbReference>
<dbReference type="NCBIfam" id="TIGR00115">
    <property type="entry name" value="tig"/>
    <property type="match status" value="1"/>
</dbReference>
<dbReference type="PANTHER" id="PTHR30560">
    <property type="entry name" value="TRIGGER FACTOR CHAPERONE AND PEPTIDYL-PROLYL CIS/TRANS ISOMERASE"/>
    <property type="match status" value="1"/>
</dbReference>
<dbReference type="PANTHER" id="PTHR30560:SF3">
    <property type="entry name" value="TRIGGER FACTOR-LIKE PROTEIN TIG, CHLOROPLASTIC"/>
    <property type="match status" value="1"/>
</dbReference>
<dbReference type="Pfam" id="PF00254">
    <property type="entry name" value="FKBP_C"/>
    <property type="match status" value="1"/>
</dbReference>
<dbReference type="Pfam" id="PF05698">
    <property type="entry name" value="Trigger_C"/>
    <property type="match status" value="1"/>
</dbReference>
<dbReference type="Pfam" id="PF05697">
    <property type="entry name" value="Trigger_N"/>
    <property type="match status" value="1"/>
</dbReference>
<dbReference type="PIRSF" id="PIRSF003095">
    <property type="entry name" value="Trigger_factor"/>
    <property type="match status" value="1"/>
</dbReference>
<dbReference type="SUPFAM" id="SSF54534">
    <property type="entry name" value="FKBP-like"/>
    <property type="match status" value="1"/>
</dbReference>
<dbReference type="SUPFAM" id="SSF109998">
    <property type="entry name" value="Triger factor/SurA peptide-binding domain-like"/>
    <property type="match status" value="1"/>
</dbReference>
<dbReference type="SUPFAM" id="SSF102735">
    <property type="entry name" value="Trigger factor ribosome-binding domain"/>
    <property type="match status" value="1"/>
</dbReference>
<dbReference type="PROSITE" id="PS50059">
    <property type="entry name" value="FKBP_PPIASE"/>
    <property type="match status" value="1"/>
</dbReference>
<proteinExistence type="inferred from homology"/>
<name>TIG_RHIJ3</name>
<accession>Q1MHK9</accession>
<evidence type="ECO:0000255" key="1">
    <source>
        <dbReference type="HAMAP-Rule" id="MF_00303"/>
    </source>
</evidence>
<evidence type="ECO:0000256" key="2">
    <source>
        <dbReference type="SAM" id="MobiDB-lite"/>
    </source>
</evidence>
<organism>
    <name type="scientific">Rhizobium johnstonii (strain DSM 114642 / LMG 32736 / 3841)</name>
    <name type="common">Rhizobium leguminosarum bv. viciae</name>
    <dbReference type="NCBI Taxonomy" id="216596"/>
    <lineage>
        <taxon>Bacteria</taxon>
        <taxon>Pseudomonadati</taxon>
        <taxon>Pseudomonadota</taxon>
        <taxon>Alphaproteobacteria</taxon>
        <taxon>Hyphomicrobiales</taxon>
        <taxon>Rhizobiaceae</taxon>
        <taxon>Rhizobium/Agrobacterium group</taxon>
        <taxon>Rhizobium</taxon>
        <taxon>Rhizobium johnstonii</taxon>
    </lineage>
</organism>
<feature type="chain" id="PRO_0000256601" description="Trigger factor">
    <location>
        <begin position="1"/>
        <end position="494"/>
    </location>
</feature>
<feature type="domain" description="PPIase FKBP-type" evidence="1">
    <location>
        <begin position="169"/>
        <end position="254"/>
    </location>
</feature>
<feature type="region of interest" description="Disordered" evidence="2">
    <location>
        <begin position="441"/>
        <end position="494"/>
    </location>
</feature>
<comment type="function">
    <text evidence="1">Involved in protein export. Acts as a chaperone by maintaining the newly synthesized protein in an open conformation. Functions as a peptidyl-prolyl cis-trans isomerase.</text>
</comment>
<comment type="catalytic activity">
    <reaction evidence="1">
        <text>[protein]-peptidylproline (omega=180) = [protein]-peptidylproline (omega=0)</text>
        <dbReference type="Rhea" id="RHEA:16237"/>
        <dbReference type="Rhea" id="RHEA-COMP:10747"/>
        <dbReference type="Rhea" id="RHEA-COMP:10748"/>
        <dbReference type="ChEBI" id="CHEBI:83833"/>
        <dbReference type="ChEBI" id="CHEBI:83834"/>
        <dbReference type="EC" id="5.2.1.8"/>
    </reaction>
</comment>
<comment type="subcellular location">
    <subcellularLocation>
        <location>Cytoplasm</location>
    </subcellularLocation>
    <text evidence="1">About half TF is bound to the ribosome near the polypeptide exit tunnel while the other half is free in the cytoplasm.</text>
</comment>
<comment type="domain">
    <text evidence="1">Consists of 3 domains; the N-terminus binds the ribosome, the middle domain has PPIase activity, while the C-terminus has intrinsic chaperone activity on its own.</text>
</comment>
<comment type="similarity">
    <text evidence="1">Belongs to the FKBP-type PPIase family. Tig subfamily.</text>
</comment>